<accession>Q62356</accession>
<accession>Q6GTX2</accession>
<accession>Q99JI9</accession>
<evidence type="ECO:0000250" key="1">
    <source>
        <dbReference type="UniProtKB" id="Q12841"/>
    </source>
</evidence>
<evidence type="ECO:0000250" key="2">
    <source>
        <dbReference type="UniProtKB" id="Q62632"/>
    </source>
</evidence>
<evidence type="ECO:0000255" key="3"/>
<evidence type="ECO:0000255" key="4">
    <source>
        <dbReference type="PROSITE-ProRule" id="PRU00448"/>
    </source>
</evidence>
<evidence type="ECO:0000255" key="5">
    <source>
        <dbReference type="PROSITE-ProRule" id="PRU00798"/>
    </source>
</evidence>
<evidence type="ECO:0000269" key="6">
    <source>
    </source>
</evidence>
<evidence type="ECO:0000269" key="7">
    <source>
    </source>
</evidence>
<evidence type="ECO:0000269" key="8">
    <source>
    </source>
</evidence>
<evidence type="ECO:0000269" key="9">
    <source>
    </source>
</evidence>
<evidence type="ECO:0000269" key="10">
    <source>
    </source>
</evidence>
<evidence type="ECO:0000305" key="11"/>
<evidence type="ECO:0007744" key="12">
    <source>
        <dbReference type="PDB" id="6JZA"/>
    </source>
</evidence>
<evidence type="ECO:0007829" key="13">
    <source>
        <dbReference type="PDB" id="6JZA"/>
    </source>
</evidence>
<keyword id="KW-0002">3D-structure</keyword>
<keyword id="KW-1015">Disulfide bond</keyword>
<keyword id="KW-0325">Glycoprotein</keyword>
<keyword id="KW-0358">Heparin-binding</keyword>
<keyword id="KW-0597">Phosphoprotein</keyword>
<keyword id="KW-1185">Reference proteome</keyword>
<keyword id="KW-0677">Repeat</keyword>
<keyword id="KW-0964">Secreted</keyword>
<keyword id="KW-0732">Signal</keyword>
<comment type="function">
    <text evidence="1 7 8 9">Secreted glycoprotein that is involved in various physiological processes, such as angiogenesis, regulation of the immune response, cell proliferation and differentiation (By similarity). Plays a role in the development of the central nervous system, skeletal system, lungs, and ureter (PubMed:19595790, PubMed:21826198). Promotes endothelial cell survival, migration and differentiation into network structures in an AKT-dependent manner. Also promotes survival of cardiac myocytes (PubMed:20054002). Initiates various signaling cascades by activating different receptors on the cell surface such as DIP2A, TLR4 or BMP receptors (By similarity).</text>
</comment>
<comment type="subunit">
    <text evidence="1 2 8 10">Homodimer (PubMed:31351024). Interacts with SCN10A (By similarity). Interacts with DIP2A; DIP2A may act as a cell surface receptor for FSTL1 (PubMed:20054002). Interacts with BMP4 (By similarity). Interacts with CD14; this interaction promotes TL4-mediated signaling cascade (By similarity).</text>
</comment>
<comment type="interaction">
    <interactant intactId="EBI-2564326">
        <id>Q62356</id>
    </interactant>
    <interactant intactId="EBI-2564275">
        <id>Q14689</id>
        <label>DIP2A</label>
    </interactant>
    <organismsDiffer>true</organismsDiffer>
    <experiments>3</experiments>
</comment>
<comment type="subcellular location">
    <subcellularLocation>
        <location evidence="11">Secreted</location>
    </subcellularLocation>
</comment>
<comment type="tissue specificity">
    <text evidence="7 9">During central nervous system development, strongly expressed in the telencephalon, diencephalon, brainstem, limbic system and spinal cord (PubMed:19595790). Widely expressed in all organs (PubMed:21826198).</text>
</comment>
<comment type="disruption phenotype">
    <text evidence="9">Deletion mice die at birth from respiratory distress and show multiple defects in lung development. In addition, skeletal development is strongly impaired.</text>
</comment>
<dbReference type="EMBL" id="M91380">
    <property type="protein sequence ID" value="AAC37633.1"/>
    <property type="molecule type" value="mRNA"/>
</dbReference>
<dbReference type="EMBL" id="AK049440">
    <property type="protein sequence ID" value="BAC33751.1"/>
    <property type="molecule type" value="mRNA"/>
</dbReference>
<dbReference type="EMBL" id="AK147117">
    <property type="protein sequence ID" value="BAE27689.1"/>
    <property type="molecule type" value="mRNA"/>
</dbReference>
<dbReference type="EMBL" id="CH466521">
    <property type="protein sequence ID" value="EDK97964.1"/>
    <property type="molecule type" value="Genomic_DNA"/>
</dbReference>
<dbReference type="EMBL" id="BC028921">
    <property type="protein sequence ID" value="AAH28921.1"/>
    <property type="molecule type" value="mRNA"/>
</dbReference>
<dbReference type="EMBL" id="BC006185">
    <property type="status" value="NOT_ANNOTATED_CDS"/>
    <property type="molecule type" value="mRNA"/>
</dbReference>
<dbReference type="CCDS" id="CCDS37339.1"/>
<dbReference type="PIR" id="S38251">
    <property type="entry name" value="S38251"/>
</dbReference>
<dbReference type="RefSeq" id="NP_032073.2">
    <property type="nucleotide sequence ID" value="NM_008047.5"/>
</dbReference>
<dbReference type="PDB" id="6JZA">
    <property type="method" value="X-ray"/>
    <property type="resolution" value="2.30 A"/>
    <property type="chains" value="A=20-98"/>
</dbReference>
<dbReference type="PDBsum" id="6JZA"/>
<dbReference type="SMR" id="Q62356"/>
<dbReference type="BioGRID" id="199752">
    <property type="interactions" value="3"/>
</dbReference>
<dbReference type="DIP" id="DIP-56414N"/>
<dbReference type="FunCoup" id="Q62356">
    <property type="interactions" value="639"/>
</dbReference>
<dbReference type="IntAct" id="Q62356">
    <property type="interactions" value="4"/>
</dbReference>
<dbReference type="STRING" id="10090.ENSMUSP00000110411"/>
<dbReference type="MEROPS" id="I01.967"/>
<dbReference type="GlyCosmos" id="Q62356">
    <property type="glycosylation" value="3 sites, No reported glycans"/>
</dbReference>
<dbReference type="GlyGen" id="Q62356">
    <property type="glycosylation" value="3 sites, 3 N-linked glycans (3 sites)"/>
</dbReference>
<dbReference type="iPTMnet" id="Q62356"/>
<dbReference type="PhosphoSitePlus" id="Q62356"/>
<dbReference type="CPTAC" id="non-CPTAC-3314"/>
<dbReference type="jPOST" id="Q62356"/>
<dbReference type="PaxDb" id="10090-ENSMUSP00000110411"/>
<dbReference type="PeptideAtlas" id="Q62356"/>
<dbReference type="ProteomicsDB" id="267528"/>
<dbReference type="Pumba" id="Q62356"/>
<dbReference type="Antibodypedia" id="32794">
    <property type="antibodies" value="426 antibodies from 31 providers"/>
</dbReference>
<dbReference type="DNASU" id="14314"/>
<dbReference type="Ensembl" id="ENSMUST00000114763.3">
    <property type="protein sequence ID" value="ENSMUSP00000110411.3"/>
    <property type="gene ID" value="ENSMUSG00000022816.12"/>
</dbReference>
<dbReference type="GeneID" id="14314"/>
<dbReference type="KEGG" id="mmu:14314"/>
<dbReference type="UCSC" id="uc007zej.1">
    <property type="organism name" value="mouse"/>
</dbReference>
<dbReference type="AGR" id="MGI:102793"/>
<dbReference type="CTD" id="11167"/>
<dbReference type="MGI" id="MGI:102793">
    <property type="gene designation" value="Fstl1"/>
</dbReference>
<dbReference type="VEuPathDB" id="HostDB:ENSMUSG00000022816"/>
<dbReference type="eggNOG" id="ENOG502QQAG">
    <property type="taxonomic scope" value="Eukaryota"/>
</dbReference>
<dbReference type="GeneTree" id="ENSGT00940000157784"/>
<dbReference type="HOGENOM" id="CLU_038229_0_0_1"/>
<dbReference type="InParanoid" id="Q62356"/>
<dbReference type="OMA" id="CIERCKP"/>
<dbReference type="OrthoDB" id="88467at2759"/>
<dbReference type="PhylomeDB" id="Q62356"/>
<dbReference type="TreeFam" id="TF106409"/>
<dbReference type="Reactome" id="R-MMU-201451">
    <property type="pathway name" value="Signaling by BMP"/>
</dbReference>
<dbReference type="Reactome" id="R-MMU-381426">
    <property type="pathway name" value="Regulation of Insulin-like Growth Factor (IGF) transport and uptake by Insulin-like Growth Factor Binding Proteins (IGFBPs)"/>
</dbReference>
<dbReference type="Reactome" id="R-MMU-8957275">
    <property type="pathway name" value="Post-translational protein phosphorylation"/>
</dbReference>
<dbReference type="BioGRID-ORCS" id="14314">
    <property type="hits" value="0 hits in 76 CRISPR screens"/>
</dbReference>
<dbReference type="ChiTaRS" id="Fstl1">
    <property type="organism name" value="mouse"/>
</dbReference>
<dbReference type="PRO" id="PR:Q62356"/>
<dbReference type="Proteomes" id="UP000000589">
    <property type="component" value="Chromosome 16"/>
</dbReference>
<dbReference type="RNAct" id="Q62356">
    <property type="molecule type" value="protein"/>
</dbReference>
<dbReference type="Bgee" id="ENSMUSG00000022816">
    <property type="expression patterns" value="Expressed in epithelium of cochlear duct and 308 other cell types or tissues"/>
</dbReference>
<dbReference type="GO" id="GO:0005615">
    <property type="term" value="C:extracellular space"/>
    <property type="evidence" value="ECO:0007005"/>
    <property type="project" value="BHF-UCL"/>
</dbReference>
<dbReference type="GO" id="GO:0005509">
    <property type="term" value="F:calcium ion binding"/>
    <property type="evidence" value="ECO:0007669"/>
    <property type="project" value="InterPro"/>
</dbReference>
<dbReference type="GO" id="GO:0008201">
    <property type="term" value="F:heparin binding"/>
    <property type="evidence" value="ECO:0007669"/>
    <property type="project" value="UniProtKB-KW"/>
</dbReference>
<dbReference type="GO" id="GO:0045446">
    <property type="term" value="P:endothelial cell differentiation"/>
    <property type="evidence" value="ECO:0000315"/>
    <property type="project" value="UniProtKB"/>
</dbReference>
<dbReference type="GO" id="GO:0043542">
    <property type="term" value="P:endothelial cell migration"/>
    <property type="evidence" value="ECO:0000314"/>
    <property type="project" value="UniProtKB"/>
</dbReference>
<dbReference type="GO" id="GO:0061484">
    <property type="term" value="P:hematopoietic stem cell homeostasis"/>
    <property type="evidence" value="ECO:0000315"/>
    <property type="project" value="MGI"/>
</dbReference>
<dbReference type="GO" id="GO:0043066">
    <property type="term" value="P:negative regulation of apoptotic process"/>
    <property type="evidence" value="ECO:0000315"/>
    <property type="project" value="UniProtKB"/>
</dbReference>
<dbReference type="CDD" id="cd16233">
    <property type="entry name" value="EFh_SPARC_FSTL1"/>
    <property type="match status" value="1"/>
</dbReference>
<dbReference type="CDD" id="cd00104">
    <property type="entry name" value="KAZAL_FS"/>
    <property type="match status" value="1"/>
</dbReference>
<dbReference type="FunFam" id="3.30.60.30:FF:000017">
    <property type="entry name" value="Follistatin like 1"/>
    <property type="match status" value="1"/>
</dbReference>
<dbReference type="Gene3D" id="3.30.60.30">
    <property type="match status" value="1"/>
</dbReference>
<dbReference type="Gene3D" id="1.10.238.10">
    <property type="entry name" value="EF-hand"/>
    <property type="match status" value="1"/>
</dbReference>
<dbReference type="InterPro" id="IPR011992">
    <property type="entry name" value="EF-hand-dom_pair"/>
</dbReference>
<dbReference type="InterPro" id="IPR057020">
    <property type="entry name" value="EF-hand_FSTL1"/>
</dbReference>
<dbReference type="InterPro" id="IPR002048">
    <property type="entry name" value="EF_hand_dom"/>
</dbReference>
<dbReference type="InterPro" id="IPR003645">
    <property type="entry name" value="Fol_N"/>
</dbReference>
<dbReference type="InterPro" id="IPR015369">
    <property type="entry name" value="Follistatin/Osteonectin_EGF"/>
</dbReference>
<dbReference type="InterPro" id="IPR002350">
    <property type="entry name" value="Kazal_dom"/>
</dbReference>
<dbReference type="InterPro" id="IPR036058">
    <property type="entry name" value="Kazal_dom_sf"/>
</dbReference>
<dbReference type="InterPro" id="IPR050653">
    <property type="entry name" value="Prot_Inhib_GrowthFact_Antg"/>
</dbReference>
<dbReference type="PANTHER" id="PTHR10913">
    <property type="entry name" value="FOLLISTATIN-RELATED"/>
    <property type="match status" value="1"/>
</dbReference>
<dbReference type="PANTHER" id="PTHR10913:SF13">
    <property type="entry name" value="FOLLISTATIN-RELATED PROTEIN 1"/>
    <property type="match status" value="1"/>
</dbReference>
<dbReference type="Pfam" id="PF23564">
    <property type="entry name" value="EF-hand_FSTL1"/>
    <property type="match status" value="1"/>
</dbReference>
<dbReference type="Pfam" id="PF09289">
    <property type="entry name" value="FOLN"/>
    <property type="match status" value="1"/>
</dbReference>
<dbReference type="Pfam" id="PF07648">
    <property type="entry name" value="Kazal_2"/>
    <property type="match status" value="1"/>
</dbReference>
<dbReference type="Pfam" id="PF23244">
    <property type="entry name" value="VWF"/>
    <property type="match status" value="1"/>
</dbReference>
<dbReference type="SMART" id="SM00274">
    <property type="entry name" value="FOLN"/>
    <property type="match status" value="1"/>
</dbReference>
<dbReference type="SMART" id="SM00280">
    <property type="entry name" value="KAZAL"/>
    <property type="match status" value="1"/>
</dbReference>
<dbReference type="SUPFAM" id="SSF47473">
    <property type="entry name" value="EF-hand"/>
    <property type="match status" value="1"/>
</dbReference>
<dbReference type="SUPFAM" id="SSF57603">
    <property type="entry name" value="FnI-like domain"/>
    <property type="match status" value="1"/>
</dbReference>
<dbReference type="SUPFAM" id="SSF100895">
    <property type="entry name" value="Kazal-type serine protease inhibitors"/>
    <property type="match status" value="1"/>
</dbReference>
<dbReference type="PROSITE" id="PS50222">
    <property type="entry name" value="EF_HAND_2"/>
    <property type="match status" value="2"/>
</dbReference>
<dbReference type="PROSITE" id="PS51465">
    <property type="entry name" value="KAZAL_2"/>
    <property type="match status" value="1"/>
</dbReference>
<protein>
    <recommendedName>
        <fullName>Follistatin-related protein 1</fullName>
    </recommendedName>
    <alternativeName>
        <fullName>Follistatin-like protein 1</fullName>
    </alternativeName>
    <alternativeName>
        <fullName>TGF-beta-inducible protein TSC-36</fullName>
    </alternativeName>
</protein>
<sequence>MWKRWLALSLVTIALVHGEEEPRSKSKICANVFCGAGRECAVTEKGEPTCLCIEQCKPHKRPVCGSNGKTYLNHCELHRDACLTGSKIQVDYDGHCKEKKSASPSASPVVCYQANRDELRRRLIQWLEAEIIPDGWFSKGSNYSEILDKYFKSFDNGDSHLDSSEFLKFVEQNETAINITTYADQENNKLLRSLCVDALIELSDENADWKLSFQEFLKCLNPSFNPPEKKCALEDETYADGAETEVDCNRCVCSCGHWVCTAMTCDGKNQKGVQTHTEEEKTGYVQELQKHQGTAEKTKKVNTKEI</sequence>
<gene>
    <name type="primary">Fstl1</name>
    <name type="synonym">Frp</name>
    <name type="synonym">Fstl</name>
    <name type="synonym">Tsc36</name>
</gene>
<feature type="signal peptide" evidence="1">
    <location>
        <begin position="1"/>
        <end position="18"/>
    </location>
</feature>
<feature type="chain" id="PRO_0000010113" description="Follistatin-related protein 1">
    <location>
        <begin position="19"/>
        <end position="306"/>
    </location>
</feature>
<feature type="domain" description="Follistatin-like">
    <location>
        <begin position="28"/>
        <end position="51"/>
    </location>
</feature>
<feature type="domain" description="Kazal-like" evidence="5">
    <location>
        <begin position="46"/>
        <end position="98"/>
    </location>
</feature>
<feature type="domain" description="EF-hand 1" evidence="4">
    <location>
        <begin position="142"/>
        <end position="176"/>
    </location>
</feature>
<feature type="domain" description="EF-hand 2" evidence="4">
    <location>
        <begin position="191"/>
        <end position="226"/>
    </location>
</feature>
<feature type="domain" description="VWFC">
    <location>
        <begin position="231"/>
        <end position="285"/>
    </location>
</feature>
<feature type="modified residue" description="Phosphoserine" evidence="1">
    <location>
        <position position="163"/>
    </location>
</feature>
<feature type="glycosylation site" description="N-linked (GlcNAc...) asparagine" evidence="6">
    <location>
        <position position="142"/>
    </location>
</feature>
<feature type="glycosylation site" description="N-linked (GlcNAc...) asparagine" evidence="3">
    <location>
        <position position="173"/>
    </location>
</feature>
<feature type="glycosylation site" description="N-linked (GlcNAc...) asparagine" evidence="3">
    <location>
        <position position="178"/>
    </location>
</feature>
<feature type="disulfide bond" evidence="10 12">
    <location>
        <begin position="29"/>
        <end position="40"/>
    </location>
</feature>
<feature type="disulfide bond" evidence="10 12">
    <location>
        <begin position="34"/>
        <end position="50"/>
    </location>
</feature>
<feature type="disulfide bond" evidence="5 10 12">
    <location>
        <begin position="52"/>
        <end position="82"/>
    </location>
</feature>
<feature type="disulfide bond" evidence="5 10 12">
    <location>
        <begin position="56"/>
        <end position="75"/>
    </location>
</feature>
<feature type="disulfide bond" evidence="5 10 12">
    <location>
        <begin position="64"/>
        <end position="96"/>
    </location>
</feature>
<feature type="sequence conflict" description="In Ref. 1; AAC37633." evidence="11" ref="1">
    <original>D</original>
    <variation>V</variation>
    <location>
        <position position="235"/>
    </location>
</feature>
<feature type="turn" evidence="13">
    <location>
        <begin position="26"/>
        <end position="31"/>
    </location>
</feature>
<feature type="strand" evidence="13">
    <location>
        <begin position="38"/>
        <end position="42"/>
    </location>
</feature>
<feature type="strand" evidence="13">
    <location>
        <begin position="48"/>
        <end position="52"/>
    </location>
</feature>
<feature type="strand" evidence="13">
    <location>
        <begin position="63"/>
        <end position="65"/>
    </location>
</feature>
<feature type="strand" evidence="13">
    <location>
        <begin position="70"/>
        <end position="73"/>
    </location>
</feature>
<feature type="helix" evidence="13">
    <location>
        <begin position="74"/>
        <end position="84"/>
    </location>
</feature>
<feature type="strand" evidence="13">
    <location>
        <begin position="90"/>
        <end position="95"/>
    </location>
</feature>
<name>FSTL1_MOUSE</name>
<proteinExistence type="evidence at protein level"/>
<organism>
    <name type="scientific">Mus musculus</name>
    <name type="common">Mouse</name>
    <dbReference type="NCBI Taxonomy" id="10090"/>
    <lineage>
        <taxon>Eukaryota</taxon>
        <taxon>Metazoa</taxon>
        <taxon>Chordata</taxon>
        <taxon>Craniata</taxon>
        <taxon>Vertebrata</taxon>
        <taxon>Euteleostomi</taxon>
        <taxon>Mammalia</taxon>
        <taxon>Eutheria</taxon>
        <taxon>Euarchontoglires</taxon>
        <taxon>Glires</taxon>
        <taxon>Rodentia</taxon>
        <taxon>Myomorpha</taxon>
        <taxon>Muroidea</taxon>
        <taxon>Muridae</taxon>
        <taxon>Murinae</taxon>
        <taxon>Mus</taxon>
        <taxon>Mus</taxon>
    </lineage>
</organism>
<reference key="1">
    <citation type="journal article" date="1993" name="Eur. J. Biochem.">
        <title>Cloning from a mouse osteoblastic cell line of a set of transforming-growth-factor-beta 1-regulated genes, one of which seems to encode a follistatin-related polypeptide.</title>
        <authorList>
            <person name="Shibanuma M."/>
            <person name="Mashimo J."/>
            <person name="Mita A."/>
            <person name="Kuroki T."/>
            <person name="Nose K."/>
        </authorList>
    </citation>
    <scope>NUCLEOTIDE SEQUENCE [MRNA]</scope>
</reference>
<reference key="2">
    <citation type="journal article" date="2005" name="Science">
        <title>The transcriptional landscape of the mammalian genome.</title>
        <authorList>
            <person name="Carninci P."/>
            <person name="Kasukawa T."/>
            <person name="Katayama S."/>
            <person name="Gough J."/>
            <person name="Frith M.C."/>
            <person name="Maeda N."/>
            <person name="Oyama R."/>
            <person name="Ravasi T."/>
            <person name="Lenhard B."/>
            <person name="Wells C."/>
            <person name="Kodzius R."/>
            <person name="Shimokawa K."/>
            <person name="Bajic V.B."/>
            <person name="Brenner S.E."/>
            <person name="Batalov S."/>
            <person name="Forrest A.R."/>
            <person name="Zavolan M."/>
            <person name="Davis M.J."/>
            <person name="Wilming L.G."/>
            <person name="Aidinis V."/>
            <person name="Allen J.E."/>
            <person name="Ambesi-Impiombato A."/>
            <person name="Apweiler R."/>
            <person name="Aturaliya R.N."/>
            <person name="Bailey T.L."/>
            <person name="Bansal M."/>
            <person name="Baxter L."/>
            <person name="Beisel K.W."/>
            <person name="Bersano T."/>
            <person name="Bono H."/>
            <person name="Chalk A.M."/>
            <person name="Chiu K.P."/>
            <person name="Choudhary V."/>
            <person name="Christoffels A."/>
            <person name="Clutterbuck D.R."/>
            <person name="Crowe M.L."/>
            <person name="Dalla E."/>
            <person name="Dalrymple B.P."/>
            <person name="de Bono B."/>
            <person name="Della Gatta G."/>
            <person name="di Bernardo D."/>
            <person name="Down T."/>
            <person name="Engstrom P."/>
            <person name="Fagiolini M."/>
            <person name="Faulkner G."/>
            <person name="Fletcher C.F."/>
            <person name="Fukushima T."/>
            <person name="Furuno M."/>
            <person name="Futaki S."/>
            <person name="Gariboldi M."/>
            <person name="Georgii-Hemming P."/>
            <person name="Gingeras T.R."/>
            <person name="Gojobori T."/>
            <person name="Green R.E."/>
            <person name="Gustincich S."/>
            <person name="Harbers M."/>
            <person name="Hayashi Y."/>
            <person name="Hensch T.K."/>
            <person name="Hirokawa N."/>
            <person name="Hill D."/>
            <person name="Huminiecki L."/>
            <person name="Iacono M."/>
            <person name="Ikeo K."/>
            <person name="Iwama A."/>
            <person name="Ishikawa T."/>
            <person name="Jakt M."/>
            <person name="Kanapin A."/>
            <person name="Katoh M."/>
            <person name="Kawasawa Y."/>
            <person name="Kelso J."/>
            <person name="Kitamura H."/>
            <person name="Kitano H."/>
            <person name="Kollias G."/>
            <person name="Krishnan S.P."/>
            <person name="Kruger A."/>
            <person name="Kummerfeld S.K."/>
            <person name="Kurochkin I.V."/>
            <person name="Lareau L.F."/>
            <person name="Lazarevic D."/>
            <person name="Lipovich L."/>
            <person name="Liu J."/>
            <person name="Liuni S."/>
            <person name="McWilliam S."/>
            <person name="Madan Babu M."/>
            <person name="Madera M."/>
            <person name="Marchionni L."/>
            <person name="Matsuda H."/>
            <person name="Matsuzawa S."/>
            <person name="Miki H."/>
            <person name="Mignone F."/>
            <person name="Miyake S."/>
            <person name="Morris K."/>
            <person name="Mottagui-Tabar S."/>
            <person name="Mulder N."/>
            <person name="Nakano N."/>
            <person name="Nakauchi H."/>
            <person name="Ng P."/>
            <person name="Nilsson R."/>
            <person name="Nishiguchi S."/>
            <person name="Nishikawa S."/>
            <person name="Nori F."/>
            <person name="Ohara O."/>
            <person name="Okazaki Y."/>
            <person name="Orlando V."/>
            <person name="Pang K.C."/>
            <person name="Pavan W.J."/>
            <person name="Pavesi G."/>
            <person name="Pesole G."/>
            <person name="Petrovsky N."/>
            <person name="Piazza S."/>
            <person name="Reed J."/>
            <person name="Reid J.F."/>
            <person name="Ring B.Z."/>
            <person name="Ringwald M."/>
            <person name="Rost B."/>
            <person name="Ruan Y."/>
            <person name="Salzberg S.L."/>
            <person name="Sandelin A."/>
            <person name="Schneider C."/>
            <person name="Schoenbach C."/>
            <person name="Sekiguchi K."/>
            <person name="Semple C.A."/>
            <person name="Seno S."/>
            <person name="Sessa L."/>
            <person name="Sheng Y."/>
            <person name="Shibata Y."/>
            <person name="Shimada H."/>
            <person name="Shimada K."/>
            <person name="Silva D."/>
            <person name="Sinclair B."/>
            <person name="Sperling S."/>
            <person name="Stupka E."/>
            <person name="Sugiura K."/>
            <person name="Sultana R."/>
            <person name="Takenaka Y."/>
            <person name="Taki K."/>
            <person name="Tammoja K."/>
            <person name="Tan S.L."/>
            <person name="Tang S."/>
            <person name="Taylor M.S."/>
            <person name="Tegner J."/>
            <person name="Teichmann S.A."/>
            <person name="Ueda H.R."/>
            <person name="van Nimwegen E."/>
            <person name="Verardo R."/>
            <person name="Wei C.L."/>
            <person name="Yagi K."/>
            <person name="Yamanishi H."/>
            <person name="Zabarovsky E."/>
            <person name="Zhu S."/>
            <person name="Zimmer A."/>
            <person name="Hide W."/>
            <person name="Bult C."/>
            <person name="Grimmond S.M."/>
            <person name="Teasdale R.D."/>
            <person name="Liu E.T."/>
            <person name="Brusic V."/>
            <person name="Quackenbush J."/>
            <person name="Wahlestedt C."/>
            <person name="Mattick J.S."/>
            <person name="Hume D.A."/>
            <person name="Kai C."/>
            <person name="Sasaki D."/>
            <person name="Tomaru Y."/>
            <person name="Fukuda S."/>
            <person name="Kanamori-Katayama M."/>
            <person name="Suzuki M."/>
            <person name="Aoki J."/>
            <person name="Arakawa T."/>
            <person name="Iida J."/>
            <person name="Imamura K."/>
            <person name="Itoh M."/>
            <person name="Kato T."/>
            <person name="Kawaji H."/>
            <person name="Kawagashira N."/>
            <person name="Kawashima T."/>
            <person name="Kojima M."/>
            <person name="Kondo S."/>
            <person name="Konno H."/>
            <person name="Nakano K."/>
            <person name="Ninomiya N."/>
            <person name="Nishio T."/>
            <person name="Okada M."/>
            <person name="Plessy C."/>
            <person name="Shibata K."/>
            <person name="Shiraki T."/>
            <person name="Suzuki S."/>
            <person name="Tagami M."/>
            <person name="Waki K."/>
            <person name="Watahiki A."/>
            <person name="Okamura-Oho Y."/>
            <person name="Suzuki H."/>
            <person name="Kawai J."/>
            <person name="Hayashizaki Y."/>
        </authorList>
    </citation>
    <scope>NUCLEOTIDE SEQUENCE [LARGE SCALE MRNA]</scope>
    <source>
        <strain>C57BL/6J</strain>
        <tissue>Heart</tissue>
    </source>
</reference>
<reference key="3">
    <citation type="submission" date="2005-07" db="EMBL/GenBank/DDBJ databases">
        <authorList>
            <person name="Mural R.J."/>
            <person name="Adams M.D."/>
            <person name="Myers E.W."/>
            <person name="Smith H.O."/>
            <person name="Venter J.C."/>
        </authorList>
    </citation>
    <scope>NUCLEOTIDE SEQUENCE [LARGE SCALE GENOMIC DNA]</scope>
</reference>
<reference key="4">
    <citation type="journal article" date="2004" name="Genome Res.">
        <title>The status, quality, and expansion of the NIH full-length cDNA project: the Mammalian Gene Collection (MGC).</title>
        <authorList>
            <consortium name="The MGC Project Team"/>
        </authorList>
    </citation>
    <scope>NUCLEOTIDE SEQUENCE [LARGE SCALE MRNA]</scope>
    <source>
        <strain>FVB/N</strain>
    </source>
</reference>
<reference key="5">
    <citation type="journal article" date="2006" name="J. Proteome Res.">
        <title>Proteome-wide characterization of N-glycosylation events by diagonal chromatography.</title>
        <authorList>
            <person name="Ghesquiere B."/>
            <person name="Van Damme J."/>
            <person name="Martens L."/>
            <person name="Vandekerckhove J."/>
            <person name="Gevaert K."/>
        </authorList>
    </citation>
    <scope>GLYCOSYLATION [LARGE SCALE ANALYSIS] AT ASN-142</scope>
    <source>
        <strain>C57BL/6J</strain>
        <tissue>Plasma</tissue>
    </source>
</reference>
<reference key="6">
    <citation type="journal article" date="2009" name="Gene Expr. Patterns">
        <title>The expression pattern of Follistatin-like 1 in mouse central nervous system development.</title>
        <authorList>
            <person name="Yang Y."/>
            <person name="Liu J."/>
            <person name="Mao H."/>
            <person name="Hu Y.A."/>
            <person name="Yan Y."/>
            <person name="Zhao C."/>
        </authorList>
    </citation>
    <scope>TISSUE SPECIFICITY</scope>
    <scope>FUNCTION</scope>
</reference>
<reference key="7">
    <citation type="journal article" date="2010" name="J. Biol. Chem.">
        <title>DIP2A functions as a FSTL1 receptor.</title>
        <authorList>
            <person name="Ouchi N."/>
            <person name="Asaumi Y."/>
            <person name="Ohashi K."/>
            <person name="Higuchi A."/>
            <person name="Sono-Romanelli S."/>
            <person name="Oshima Y."/>
            <person name="Walsh K."/>
        </authorList>
    </citation>
    <scope>FUNCTION</scope>
    <scope>INTERACTION WITH DIP2A</scope>
</reference>
<reference key="8">
    <citation type="journal article" date="2011" name="PLoS ONE">
        <title>The BMP antagonist follistatin-like 1 is required for skeletal and lung organogenesis.</title>
        <authorList>
            <person name="Sylva M."/>
            <person name="Li V.S."/>
            <person name="Buffing A.A."/>
            <person name="van Es J.H."/>
            <person name="van den Born M."/>
            <person name="van der Velden S."/>
            <person name="Gunst Q."/>
            <person name="Koolstra J.H."/>
            <person name="Moorman A.F."/>
            <person name="Clevers H."/>
            <person name="van den Hoff M.J."/>
        </authorList>
    </citation>
    <scope>FUNCTION</scope>
    <scope>DISRUPTION PHENOTYPE</scope>
    <scope>TISSUE SPECIFICITY</scope>
</reference>
<reference evidence="12" key="9">
    <citation type="journal article" date="2019" name="Protein Sci.">
        <title>Structural and functional study of FK domain of Fstl1.</title>
        <authorList>
            <person name="Li X."/>
            <person name="Li L."/>
            <person name="Chang Y."/>
            <person name="Ning W."/>
            <person name="Liu X."/>
        </authorList>
    </citation>
    <scope>X-RAY CRYSTALLOGRAPHY (2.30 ANGSTROMS) OF 20-98</scope>
    <scope>DISULFIDE BOND</scope>
    <scope>SUBUNIT</scope>
</reference>